<organism>
    <name type="scientific">Saccharomyces cerevisiae (strain ATCC 204508 / S288c)</name>
    <name type="common">Baker's yeast</name>
    <dbReference type="NCBI Taxonomy" id="559292"/>
    <lineage>
        <taxon>Eukaryota</taxon>
        <taxon>Fungi</taxon>
        <taxon>Dikarya</taxon>
        <taxon>Ascomycota</taxon>
        <taxon>Saccharomycotina</taxon>
        <taxon>Saccharomycetes</taxon>
        <taxon>Saccharomycetales</taxon>
        <taxon>Saccharomycetaceae</taxon>
        <taxon>Saccharomyces</taxon>
    </lineage>
</organism>
<feature type="transit peptide" description="Mitochondrion">
    <location>
        <begin position="1"/>
        <end status="unknown"/>
    </location>
</feature>
<feature type="chain" id="PRO_0000020478" description="Dihydrolipoyllysine-residue succinyltransferase component of 2-oxoglutarate dehydrogenase complex, mitochondrial">
    <location>
        <begin status="unknown"/>
        <end position="463"/>
    </location>
</feature>
<feature type="domain" description="Lipoyl-binding" evidence="2">
    <location>
        <begin position="73"/>
        <end position="148"/>
    </location>
</feature>
<feature type="repeat" description="1">
    <location>
        <begin position="185"/>
        <end position="190"/>
    </location>
</feature>
<feature type="repeat" description="2">
    <location>
        <begin position="191"/>
        <end position="196"/>
    </location>
</feature>
<feature type="repeat" description="3">
    <location>
        <begin position="197"/>
        <end position="202"/>
    </location>
</feature>
<feature type="repeat" description="4; approximate">
    <location>
        <begin position="204"/>
        <end position="209"/>
    </location>
</feature>
<feature type="region of interest" description="Disordered" evidence="3">
    <location>
        <begin position="144"/>
        <end position="237"/>
    </location>
</feature>
<feature type="region of interest" description="4 X 6 AA approximate tandem repeats of A-[SP]-K-K-E-[AV]">
    <location>
        <begin position="185"/>
        <end position="209"/>
    </location>
</feature>
<feature type="compositionally biased region" description="Low complexity" evidence="3">
    <location>
        <begin position="148"/>
        <end position="157"/>
    </location>
</feature>
<feature type="compositionally biased region" description="Basic and acidic residues" evidence="3">
    <location>
        <begin position="184"/>
        <end position="212"/>
    </location>
</feature>
<feature type="active site" evidence="1">
    <location>
        <position position="435"/>
    </location>
</feature>
<feature type="active site" evidence="1">
    <location>
        <position position="439"/>
    </location>
</feature>
<feature type="modified residue" description="N6-lipoyllysine" evidence="2">
    <location>
        <position position="114"/>
    </location>
</feature>
<feature type="modified residue" description="Phosphothreonine" evidence="9">
    <location>
        <position position="340"/>
    </location>
</feature>
<feature type="sequence conflict" description="In Ref. 1; AAA34720." evidence="8" ref="1">
    <original>PSQGVAARENSSEETASKKEAAPKKEAAPKKEVTEPKKA</original>
    <variation>HRKVSPQGKTQVRKRLQRKKLLQRKKPLQRKKLQNQKRT</variation>
    <location>
        <begin position="170"/>
        <end position="208"/>
    </location>
</feature>
<feature type="sequence conflict" description="In Ref. 1; AAA34720." evidence="8" ref="1">
    <original>REAVT</original>
    <variation>EKLLS</variation>
    <location>
        <begin position="441"/>
        <end position="445"/>
    </location>
</feature>
<feature type="sequence conflict" description="In Ref. 1; AAA34720." evidence="8" ref="1">
    <original>MLLW</original>
    <variation>CCYGDLKFAAHTNLIS</variation>
    <location>
        <begin position="460"/>
        <end position="463"/>
    </location>
</feature>
<reference key="1">
    <citation type="journal article" date="1990" name="Mol. Cell. Biol.">
        <title>Structure and regulation of KGD2, the structural gene for yeast dihydrolipoyl transsuccinylase.</title>
        <authorList>
            <person name="Repetto B."/>
            <person name="Tzagoloff A."/>
        </authorList>
    </citation>
    <scope>NUCLEOTIDE SEQUENCE [GENOMIC DNA]</scope>
    <scope>FUNCTION</scope>
    <scope>CATALYTIC ACTIVITY</scope>
</reference>
<reference key="2">
    <citation type="journal article" date="1997" name="Nature">
        <title>The nucleotide sequence of Saccharomyces cerevisiae chromosome IV.</title>
        <authorList>
            <person name="Jacq C."/>
            <person name="Alt-Moerbe J."/>
            <person name="Andre B."/>
            <person name="Arnold W."/>
            <person name="Bahr A."/>
            <person name="Ballesta J.P.G."/>
            <person name="Bargues M."/>
            <person name="Baron L."/>
            <person name="Becker A."/>
            <person name="Biteau N."/>
            <person name="Bloecker H."/>
            <person name="Blugeon C."/>
            <person name="Boskovic J."/>
            <person name="Brandt P."/>
            <person name="Brueckner M."/>
            <person name="Buitrago M.J."/>
            <person name="Coster F."/>
            <person name="Delaveau T."/>
            <person name="del Rey F."/>
            <person name="Dujon B."/>
            <person name="Eide L.G."/>
            <person name="Garcia-Cantalejo J.M."/>
            <person name="Goffeau A."/>
            <person name="Gomez-Peris A."/>
            <person name="Granotier C."/>
            <person name="Hanemann V."/>
            <person name="Hankeln T."/>
            <person name="Hoheisel J.D."/>
            <person name="Jaeger W."/>
            <person name="Jimenez A."/>
            <person name="Jonniaux J.-L."/>
            <person name="Kraemer C."/>
            <person name="Kuester H."/>
            <person name="Laamanen P."/>
            <person name="Legros Y."/>
            <person name="Louis E.J."/>
            <person name="Moeller-Rieker S."/>
            <person name="Monnet A."/>
            <person name="Moro M."/>
            <person name="Mueller-Auer S."/>
            <person name="Nussbaumer B."/>
            <person name="Paricio N."/>
            <person name="Paulin L."/>
            <person name="Perea J."/>
            <person name="Perez-Alonso M."/>
            <person name="Perez-Ortin J.E."/>
            <person name="Pohl T.M."/>
            <person name="Prydz H."/>
            <person name="Purnelle B."/>
            <person name="Rasmussen S.W."/>
            <person name="Remacha M.A."/>
            <person name="Revuelta J.L."/>
            <person name="Rieger M."/>
            <person name="Salom D."/>
            <person name="Saluz H.P."/>
            <person name="Saiz J.E."/>
            <person name="Saren A.-M."/>
            <person name="Schaefer M."/>
            <person name="Scharfe M."/>
            <person name="Schmidt E.R."/>
            <person name="Schneider C."/>
            <person name="Scholler P."/>
            <person name="Schwarz S."/>
            <person name="Soler-Mira A."/>
            <person name="Urrestarazu L.A."/>
            <person name="Verhasselt P."/>
            <person name="Vissers S."/>
            <person name="Voet M."/>
            <person name="Volckaert G."/>
            <person name="Wagner G."/>
            <person name="Wambutt R."/>
            <person name="Wedler E."/>
            <person name="Wedler H."/>
            <person name="Woelfl S."/>
            <person name="Harris D.E."/>
            <person name="Bowman S."/>
            <person name="Brown D."/>
            <person name="Churcher C.M."/>
            <person name="Connor R."/>
            <person name="Dedman K."/>
            <person name="Gentles S."/>
            <person name="Hamlin N."/>
            <person name="Hunt S."/>
            <person name="Jones L."/>
            <person name="McDonald S."/>
            <person name="Murphy L.D."/>
            <person name="Niblett D."/>
            <person name="Odell C."/>
            <person name="Oliver K."/>
            <person name="Rajandream M.A."/>
            <person name="Richards C."/>
            <person name="Shore L."/>
            <person name="Walsh S.V."/>
            <person name="Barrell B.G."/>
            <person name="Dietrich F.S."/>
            <person name="Mulligan J.T."/>
            <person name="Allen E."/>
            <person name="Araujo R."/>
            <person name="Aviles E."/>
            <person name="Berno A."/>
            <person name="Carpenter J."/>
            <person name="Chen E."/>
            <person name="Cherry J.M."/>
            <person name="Chung E."/>
            <person name="Duncan M."/>
            <person name="Hunicke-Smith S."/>
            <person name="Hyman R.W."/>
            <person name="Komp C."/>
            <person name="Lashkari D."/>
            <person name="Lew H."/>
            <person name="Lin D."/>
            <person name="Mosedale D."/>
            <person name="Nakahara K."/>
            <person name="Namath A."/>
            <person name="Oefner P."/>
            <person name="Oh C."/>
            <person name="Petel F.X."/>
            <person name="Roberts D."/>
            <person name="Schramm S."/>
            <person name="Schroeder M."/>
            <person name="Shogren T."/>
            <person name="Shroff N."/>
            <person name="Winant A."/>
            <person name="Yelton M.A."/>
            <person name="Botstein D."/>
            <person name="Davis R.W."/>
            <person name="Johnston M."/>
            <person name="Andrews S."/>
            <person name="Brinkman R."/>
            <person name="Cooper J."/>
            <person name="Ding H."/>
            <person name="Du Z."/>
            <person name="Favello A."/>
            <person name="Fulton L."/>
            <person name="Gattung S."/>
            <person name="Greco T."/>
            <person name="Hallsworth K."/>
            <person name="Hawkins J."/>
            <person name="Hillier L.W."/>
            <person name="Jier M."/>
            <person name="Johnson D."/>
            <person name="Johnston L."/>
            <person name="Kirsten J."/>
            <person name="Kucaba T."/>
            <person name="Langston Y."/>
            <person name="Latreille P."/>
            <person name="Le T."/>
            <person name="Mardis E."/>
            <person name="Menezes S."/>
            <person name="Miller N."/>
            <person name="Nhan M."/>
            <person name="Pauley A."/>
            <person name="Peluso D."/>
            <person name="Rifkin L."/>
            <person name="Riles L."/>
            <person name="Taich A."/>
            <person name="Trevaskis E."/>
            <person name="Vignati D."/>
            <person name="Wilcox L."/>
            <person name="Wohldman P."/>
            <person name="Vaudin M."/>
            <person name="Wilson R."/>
            <person name="Waterston R."/>
            <person name="Albermann K."/>
            <person name="Hani J."/>
            <person name="Heumann K."/>
            <person name="Kleine K."/>
            <person name="Mewes H.-W."/>
            <person name="Zollner A."/>
            <person name="Zaccaria P."/>
        </authorList>
    </citation>
    <scope>NUCLEOTIDE SEQUENCE [LARGE SCALE GENOMIC DNA]</scope>
    <source>
        <strain>ATCC 204508 / S288c</strain>
    </source>
</reference>
<reference key="3">
    <citation type="journal article" date="2014" name="G3 (Bethesda)">
        <title>The reference genome sequence of Saccharomyces cerevisiae: Then and now.</title>
        <authorList>
            <person name="Engel S.R."/>
            <person name="Dietrich F.S."/>
            <person name="Fisk D.G."/>
            <person name="Binkley G."/>
            <person name="Balakrishnan R."/>
            <person name="Costanzo M.C."/>
            <person name="Dwight S.S."/>
            <person name="Hitz B.C."/>
            <person name="Karra K."/>
            <person name="Nash R.S."/>
            <person name="Weng S."/>
            <person name="Wong E.D."/>
            <person name="Lloyd P."/>
            <person name="Skrzypek M.S."/>
            <person name="Miyasato S.R."/>
            <person name="Simison M."/>
            <person name="Cherry J.M."/>
        </authorList>
    </citation>
    <scope>GENOME REANNOTATION</scope>
    <source>
        <strain>ATCC 204508 / S288c</strain>
    </source>
</reference>
<reference key="4">
    <citation type="journal article" date="1991" name="Mol. Cell. Biol.">
        <title>In vivo assembly of yeast mitochondrial alpha-ketoglutarate dehydrogenase complex.</title>
        <authorList>
            <person name="Repetto B."/>
            <person name="Tzagoloff A."/>
        </authorList>
    </citation>
    <scope>SUBUNIT</scope>
</reference>
<reference key="5">
    <citation type="journal article" date="2003" name="Nature">
        <title>Global analysis of protein expression in yeast.</title>
        <authorList>
            <person name="Ghaemmaghami S."/>
            <person name="Huh W.-K."/>
            <person name="Bower K."/>
            <person name="Howson R.W."/>
            <person name="Belle A."/>
            <person name="Dephoure N."/>
            <person name="O'Shea E.K."/>
            <person name="Weissman J.S."/>
        </authorList>
    </citation>
    <scope>LEVEL OF PROTEIN EXPRESSION [LARGE SCALE ANALYSIS]</scope>
</reference>
<reference key="6">
    <citation type="journal article" date="2007" name="Mol. Cell. Proteomics">
        <title>Profiling phosphoproteins of yeast mitochondria reveals a role of phosphorylation in assembly of the ATP synthase.</title>
        <authorList>
            <person name="Reinders J."/>
            <person name="Wagner K."/>
            <person name="Zahedi R.P."/>
            <person name="Stojanovski D."/>
            <person name="Eyrich B."/>
            <person name="van der Laan M."/>
            <person name="Rehling P."/>
            <person name="Sickmann A."/>
            <person name="Pfanner N."/>
            <person name="Meisinger C."/>
        </authorList>
    </citation>
    <scope>PHOSPHORYLATION [LARGE SCALE ANALYSIS] AT THR-340</scope>
    <scope>IDENTIFICATION BY MASS SPECTROMETRY [LARGE SCALE ANALYSIS]</scope>
    <source>
        <strain>ATCC 76625 / YPH499</strain>
    </source>
</reference>
<reference key="7">
    <citation type="journal article" date="2014" name="Mol. Biol. Cell">
        <title>The novel component Kgd4 recruits the E3 subunit to the mitochondrial alpha-ketoglutarate dehydrogenase.</title>
        <authorList>
            <person name="Heublein M."/>
            <person name="Burguillos M.A."/>
            <person name="Voegtle F.N."/>
            <person name="Teixeira P.F."/>
            <person name="Imhof A."/>
            <person name="Meisinger C."/>
            <person name="Ott M."/>
        </authorList>
    </citation>
    <scope>SUBUNIT</scope>
    <scope>SUBCELLULAR LOCATION</scope>
</reference>
<keyword id="KW-0012">Acyltransferase</keyword>
<keyword id="KW-0450">Lipoyl</keyword>
<keyword id="KW-0496">Mitochondrion</keyword>
<keyword id="KW-0597">Phosphoprotein</keyword>
<keyword id="KW-1185">Reference proteome</keyword>
<keyword id="KW-0677">Repeat</keyword>
<keyword id="KW-0808">Transferase</keyword>
<keyword id="KW-0809">Transit peptide</keyword>
<keyword id="KW-0816">Tricarboxylic acid cycle</keyword>
<protein>
    <recommendedName>
        <fullName>Dihydrolipoyllysine-residue succinyltransferase component of 2-oxoglutarate dehydrogenase complex, mitochondrial</fullName>
        <shortName>DLST</shortName>
        <ecNumber>2.3.1.61</ecNumber>
    </recommendedName>
    <alternativeName>
        <fullName>2-oxoglutarate dehydrogenase complex component E2</fullName>
        <shortName>OGDC-E2</shortName>
        <shortName>OGDHC subunit E2</shortName>
    </alternativeName>
    <alternativeName>
        <fullName>Alpha-ketoglutarate dehydrogenase subunit E2</fullName>
        <shortName>alpha-KGDHC subunit E2</shortName>
    </alternativeName>
    <alternativeName>
        <fullName>Dihydrolipoamide succinyltransferase component of 2-oxoglutarate dehydrogenase complex</fullName>
    </alternativeName>
</protein>
<name>ODO2_YEAST</name>
<proteinExistence type="evidence at protein level"/>
<gene>
    <name type="primary">KGD2</name>
    <name type="ordered locus">YDR148C</name>
    <name type="ORF">YD8358.05C</name>
</gene>
<evidence type="ECO:0000250" key="1"/>
<evidence type="ECO:0000255" key="2">
    <source>
        <dbReference type="PROSITE-ProRule" id="PRU01066"/>
    </source>
</evidence>
<evidence type="ECO:0000256" key="3">
    <source>
        <dbReference type="SAM" id="MobiDB-lite"/>
    </source>
</evidence>
<evidence type="ECO:0000269" key="4">
    <source>
    </source>
</evidence>
<evidence type="ECO:0000269" key="5">
    <source>
    </source>
</evidence>
<evidence type="ECO:0000269" key="6">
    <source>
    </source>
</evidence>
<evidence type="ECO:0000269" key="7">
    <source>
    </source>
</evidence>
<evidence type="ECO:0000305" key="8"/>
<evidence type="ECO:0007744" key="9">
    <source>
    </source>
</evidence>
<dbReference type="EC" id="2.3.1.61"/>
<dbReference type="EMBL" id="M34531">
    <property type="protein sequence ID" value="AAA34720.1"/>
    <property type="molecule type" value="Genomic_DNA"/>
</dbReference>
<dbReference type="EMBL" id="Z50046">
    <property type="protein sequence ID" value="CAA90371.1"/>
    <property type="molecule type" value="Genomic_DNA"/>
</dbReference>
<dbReference type="EMBL" id="BK006938">
    <property type="protein sequence ID" value="DAA11991.1"/>
    <property type="molecule type" value="Genomic_DNA"/>
</dbReference>
<dbReference type="PIR" id="S57975">
    <property type="entry name" value="XUBYSD"/>
</dbReference>
<dbReference type="RefSeq" id="NP_010432.3">
    <property type="nucleotide sequence ID" value="NM_001180455.3"/>
</dbReference>
<dbReference type="SMR" id="P19262"/>
<dbReference type="BioGRID" id="32202">
    <property type="interactions" value="393"/>
</dbReference>
<dbReference type="ComplexPortal" id="CPX-1293">
    <property type="entry name" value="Mitochondrial 2-oxoglutarate dehydrogenase complex"/>
</dbReference>
<dbReference type="DIP" id="DIP-1102N"/>
<dbReference type="FunCoup" id="P19262">
    <property type="interactions" value="1120"/>
</dbReference>
<dbReference type="IntAct" id="P19262">
    <property type="interactions" value="59"/>
</dbReference>
<dbReference type="MINT" id="P19262"/>
<dbReference type="STRING" id="4932.YDR148C"/>
<dbReference type="iPTMnet" id="P19262"/>
<dbReference type="PaxDb" id="4932-YDR148C"/>
<dbReference type="PeptideAtlas" id="P19262"/>
<dbReference type="EnsemblFungi" id="YDR148C_mRNA">
    <property type="protein sequence ID" value="YDR148C"/>
    <property type="gene ID" value="YDR148C"/>
</dbReference>
<dbReference type="GeneID" id="851726"/>
<dbReference type="KEGG" id="sce:YDR148C"/>
<dbReference type="AGR" id="SGD:S000002555"/>
<dbReference type="SGD" id="S000002555">
    <property type="gene designation" value="KGD2"/>
</dbReference>
<dbReference type="VEuPathDB" id="FungiDB:YDR148C"/>
<dbReference type="eggNOG" id="KOG0559">
    <property type="taxonomic scope" value="Eukaryota"/>
</dbReference>
<dbReference type="GeneTree" id="ENSGT00930000151014"/>
<dbReference type="HOGENOM" id="CLU_016733_0_1_1"/>
<dbReference type="InParanoid" id="P19262"/>
<dbReference type="OMA" id="NMPQTAV"/>
<dbReference type="OrthoDB" id="5391403at2759"/>
<dbReference type="BioCyc" id="YEAST:YDR148C-MONOMER"/>
<dbReference type="BRENDA" id="2.3.1.61">
    <property type="organism ID" value="984"/>
</dbReference>
<dbReference type="Reactome" id="R-SCE-6783984">
    <property type="pathway name" value="Glycine degradation"/>
</dbReference>
<dbReference type="Reactome" id="R-SCE-9853506">
    <property type="pathway name" value="OGDH complex synthesizes succinyl-CoA from 2-OG"/>
</dbReference>
<dbReference type="Reactome" id="R-SCE-9857492">
    <property type="pathway name" value="Protein lipoylation"/>
</dbReference>
<dbReference type="UniPathway" id="UPA00868">
    <property type="reaction ID" value="UER00840"/>
</dbReference>
<dbReference type="BioGRID-ORCS" id="851726">
    <property type="hits" value="8 hits in 10 CRISPR screens"/>
</dbReference>
<dbReference type="PRO" id="PR:P19262"/>
<dbReference type="Proteomes" id="UP000002311">
    <property type="component" value="Chromosome IV"/>
</dbReference>
<dbReference type="RNAct" id="P19262">
    <property type="molecule type" value="protein"/>
</dbReference>
<dbReference type="GO" id="GO:0042645">
    <property type="term" value="C:mitochondrial nucleoid"/>
    <property type="evidence" value="ECO:0000314"/>
    <property type="project" value="SGD"/>
</dbReference>
<dbReference type="GO" id="GO:0005739">
    <property type="term" value="C:mitochondrion"/>
    <property type="evidence" value="ECO:0000314"/>
    <property type="project" value="ComplexPortal"/>
</dbReference>
<dbReference type="GO" id="GO:0045252">
    <property type="term" value="C:oxoglutarate dehydrogenase complex"/>
    <property type="evidence" value="ECO:0000314"/>
    <property type="project" value="SGD"/>
</dbReference>
<dbReference type="GO" id="GO:0004149">
    <property type="term" value="F:dihydrolipoyllysine-residue succinyltransferase activity"/>
    <property type="evidence" value="ECO:0000315"/>
    <property type="project" value="SGD"/>
</dbReference>
<dbReference type="GO" id="GO:0006103">
    <property type="term" value="P:2-oxoglutarate metabolic process"/>
    <property type="evidence" value="ECO:0000314"/>
    <property type="project" value="ComplexPortal"/>
</dbReference>
<dbReference type="GO" id="GO:0045333">
    <property type="term" value="P:cellular respiration"/>
    <property type="evidence" value="ECO:0000315"/>
    <property type="project" value="SGD"/>
</dbReference>
<dbReference type="GO" id="GO:0033512">
    <property type="term" value="P:L-lysine catabolic process to acetyl-CoA via saccharopine"/>
    <property type="evidence" value="ECO:0007669"/>
    <property type="project" value="UniProtKB-UniPathway"/>
</dbReference>
<dbReference type="GO" id="GO:0006099">
    <property type="term" value="P:tricarboxylic acid cycle"/>
    <property type="evidence" value="ECO:0000318"/>
    <property type="project" value="GO_Central"/>
</dbReference>
<dbReference type="CDD" id="cd06849">
    <property type="entry name" value="lipoyl_domain"/>
    <property type="match status" value="1"/>
</dbReference>
<dbReference type="FunFam" id="3.30.559.10:FF:000006">
    <property type="entry name" value="Dihydrolipoyllysine-residue succinyltransferase component of 2-oxoglutarate dehydrogenase complex, mitochondrial"/>
    <property type="match status" value="1"/>
</dbReference>
<dbReference type="Gene3D" id="2.40.50.100">
    <property type="match status" value="1"/>
</dbReference>
<dbReference type="Gene3D" id="3.30.559.10">
    <property type="entry name" value="Chloramphenicol acetyltransferase-like domain"/>
    <property type="match status" value="1"/>
</dbReference>
<dbReference type="InterPro" id="IPR003016">
    <property type="entry name" value="2-oxoA_DH_lipoyl-BS"/>
</dbReference>
<dbReference type="InterPro" id="IPR050537">
    <property type="entry name" value="2-oxoacid_dehydrogenase"/>
</dbReference>
<dbReference type="InterPro" id="IPR001078">
    <property type="entry name" value="2-oxoacid_DH_actylTfrase"/>
</dbReference>
<dbReference type="InterPro" id="IPR000089">
    <property type="entry name" value="Biotin_lipoyl"/>
</dbReference>
<dbReference type="InterPro" id="IPR023213">
    <property type="entry name" value="CAT-like_dom_sf"/>
</dbReference>
<dbReference type="InterPro" id="IPR011053">
    <property type="entry name" value="Single_hybrid_motif"/>
</dbReference>
<dbReference type="InterPro" id="IPR006255">
    <property type="entry name" value="SucB"/>
</dbReference>
<dbReference type="NCBIfam" id="NF004309">
    <property type="entry name" value="PRK05704.1"/>
    <property type="match status" value="1"/>
</dbReference>
<dbReference type="NCBIfam" id="TIGR01347">
    <property type="entry name" value="sucB"/>
    <property type="match status" value="1"/>
</dbReference>
<dbReference type="PANTHER" id="PTHR43416:SF5">
    <property type="entry name" value="DIHYDROLIPOYLLYSINE-RESIDUE SUCCINYLTRANSFERASE COMPONENT OF 2-OXOGLUTARATE DEHYDROGENASE COMPLEX, MITOCHONDRIAL"/>
    <property type="match status" value="1"/>
</dbReference>
<dbReference type="PANTHER" id="PTHR43416">
    <property type="entry name" value="DIHYDROLIPOYLLYSINE-RESIDUE SUCCINYLTRANSFERASE COMPONENT OF 2-OXOGLUTARATE DEHYDROGENASE COMPLEX, MITOCHONDRIAL-RELATED"/>
    <property type="match status" value="1"/>
</dbReference>
<dbReference type="Pfam" id="PF00198">
    <property type="entry name" value="2-oxoacid_dh"/>
    <property type="match status" value="1"/>
</dbReference>
<dbReference type="Pfam" id="PF00364">
    <property type="entry name" value="Biotin_lipoyl"/>
    <property type="match status" value="1"/>
</dbReference>
<dbReference type="SUPFAM" id="SSF52777">
    <property type="entry name" value="CoA-dependent acyltransferases"/>
    <property type="match status" value="1"/>
</dbReference>
<dbReference type="SUPFAM" id="SSF51230">
    <property type="entry name" value="Single hybrid motif"/>
    <property type="match status" value="1"/>
</dbReference>
<dbReference type="PROSITE" id="PS50968">
    <property type="entry name" value="BIOTINYL_LIPOYL"/>
    <property type="match status" value="1"/>
</dbReference>
<dbReference type="PROSITE" id="PS00189">
    <property type="entry name" value="LIPOYL"/>
    <property type="match status" value="1"/>
</dbReference>
<sequence length="463" mass="50431">MLSRATRTAAAKSLVKSKVARNVMAASFVKRHASTSLFKQANKVESLGSIYLSGKKISVAANPFSITSNRFKSTSIEVPPMAESLTEGSLKEYTKNVGDFIKEDELLATIETDKIDIEVNSPVSGTVTKLNFKPEDTVTVGEELAQVEPGEAPAEGSGESKPEPTEQAEPSQGVAARENSSEETASKKEAAPKKEAAPKKEVTEPKKADQPKKTVSKAQEPPVASNSFTPFPRTETRVKMNRMRLRIAERLKESQNTAASLTTFNEVDMSALMEMRKLYKDEIIKKTGTKFGFMGLFSKACTLAAKDIPAVNGAIEGDQIVYRDYTDISVAVATPKGLVTPVVRNAESLSVLDIENEIVRLSHKARDGKLTLEDMTGGTFTISNGGVFGSLYGTPIINSPQTAVLGLHGVKERPVTVNGQIVSRPMMYLALTYDHRLLDGREAVTFLKTVKELIEDPRKMLLW</sequence>
<comment type="function">
    <text evidence="6">The 2-oxoglutarate dehydrogenase complex catalyzes the overall conversion of 2-oxoglutarate to succinyl-CoA and CO(2). It contains multiple copies of three enzymatic components: 2-oxoglutarate dehydrogenase (E1), dihydrolipoamide succinyltransferase (E2) and lipoamide dehydrogenase (E3).</text>
</comment>
<comment type="catalytic activity">
    <reaction evidence="6">
        <text>N(6)-[(R)-dihydrolipoyl]-L-lysyl-[protein] + succinyl-CoA = N(6)-[(R)-S(8)-succinyldihydrolipoyl]-L-lysyl-[protein] + CoA</text>
        <dbReference type="Rhea" id="RHEA:15213"/>
        <dbReference type="Rhea" id="RHEA-COMP:10475"/>
        <dbReference type="Rhea" id="RHEA-COMP:20092"/>
        <dbReference type="ChEBI" id="CHEBI:57287"/>
        <dbReference type="ChEBI" id="CHEBI:57292"/>
        <dbReference type="ChEBI" id="CHEBI:83100"/>
        <dbReference type="ChEBI" id="CHEBI:83120"/>
        <dbReference type="EC" id="2.3.1.61"/>
    </reaction>
</comment>
<comment type="cofactor">
    <cofactor>
        <name>(R)-lipoate</name>
        <dbReference type="ChEBI" id="CHEBI:83088"/>
    </cofactor>
    <text>Binds 1 lipoyl cofactor covalently.</text>
</comment>
<comment type="pathway">
    <text>Amino-acid degradation; L-lysine degradation via saccharopine pathway; glutaryl-CoA from L-lysine: step 6/6.</text>
</comment>
<comment type="subunit">
    <text evidence="5 7">Component of the 2-oxoglutarate dehydrogenase complex (OGDC), also called alpha-ketoglutarate dehydrogenase (KGDH) complex. The copmplex is composed of the catalytic subunits OGDH (2-oxoglutarate dehydrogenase KGD1; also called E1 subunit), DLST (dihydrolipoamide succinyltransferase KGD2; also called E2 subunit) and DLD (dihydrolipoamide dehydrogenase LPD1; also called E3 subunit), and the assembly factor KGD4.</text>
</comment>
<comment type="interaction">
    <interactant intactId="EBI-12464">
        <id>P19262</id>
    </interactant>
    <interactant intactId="EBI-12459">
        <id>P20967</id>
        <label>KGD1</label>
    </interactant>
    <organismsDiffer>false</organismsDiffer>
    <experiments>7</experiments>
</comment>
<comment type="interaction">
    <interactant intactId="EBI-12464">
        <id>P19262</id>
    </interactant>
    <interactant intactId="EBI-5940">
        <id>P09624</id>
        <label>LPD1</label>
    </interactant>
    <organismsDiffer>false</organismsDiffer>
    <experiments>5</experiments>
</comment>
<comment type="subcellular location">
    <subcellularLocation>
        <location evidence="7">Mitochondrion</location>
    </subcellularLocation>
</comment>
<comment type="induction">
    <text>Transcriptionally regulated by glucose and activated by the HAP2 and HAP3 proteins.</text>
</comment>
<comment type="miscellaneous">
    <text evidence="4">Present with 7970 molecules/cell in log phase SD medium.</text>
</comment>
<comment type="similarity">
    <text evidence="8">Belongs to the 2-oxoacid dehydrogenase family.</text>
</comment>
<accession>P19262</accession>
<accession>D6VSD1</accession>